<dbReference type="EC" id="7.1.1.-" evidence="2"/>
<dbReference type="EMBL" id="CP000815">
    <property type="protein sequence ID" value="ACB43155.1"/>
    <property type="molecule type" value="Genomic_DNA"/>
</dbReference>
<dbReference type="RefSeq" id="YP_002049365.1">
    <property type="nucleotide sequence ID" value="NC_011087.1"/>
</dbReference>
<dbReference type="SMR" id="B1X5D6"/>
<dbReference type="GeneID" id="6481593"/>
<dbReference type="GO" id="GO:0070118">
    <property type="term" value="C:organellar chromatophore thylakoid membrane"/>
    <property type="evidence" value="ECO:0007669"/>
    <property type="project" value="UniProtKB-SubCell"/>
</dbReference>
<dbReference type="GO" id="GO:0005886">
    <property type="term" value="C:plasma membrane"/>
    <property type="evidence" value="ECO:0007669"/>
    <property type="project" value="UniProtKB-UniRule"/>
</dbReference>
<dbReference type="GO" id="GO:0009536">
    <property type="term" value="C:plastid"/>
    <property type="evidence" value="ECO:0007669"/>
    <property type="project" value="UniProtKB-KW"/>
</dbReference>
<dbReference type="GO" id="GO:0008137">
    <property type="term" value="F:NADH dehydrogenase (ubiquinone) activity"/>
    <property type="evidence" value="ECO:0007669"/>
    <property type="project" value="InterPro"/>
</dbReference>
<dbReference type="GO" id="GO:0050136">
    <property type="term" value="F:NADH:ubiquinone reductase (non-electrogenic) activity"/>
    <property type="evidence" value="ECO:0007669"/>
    <property type="project" value="UniProtKB-UniRule"/>
</dbReference>
<dbReference type="GO" id="GO:0048038">
    <property type="term" value="F:quinone binding"/>
    <property type="evidence" value="ECO:0007669"/>
    <property type="project" value="UniProtKB-KW"/>
</dbReference>
<dbReference type="GO" id="GO:0042773">
    <property type="term" value="P:ATP synthesis coupled electron transport"/>
    <property type="evidence" value="ECO:0007669"/>
    <property type="project" value="InterPro"/>
</dbReference>
<dbReference type="HAMAP" id="MF_00445">
    <property type="entry name" value="NDH1_NuoN_1"/>
    <property type="match status" value="1"/>
</dbReference>
<dbReference type="InterPro" id="IPR010096">
    <property type="entry name" value="NADH-Q_OxRdtase_suN/2"/>
</dbReference>
<dbReference type="InterPro" id="IPR001750">
    <property type="entry name" value="ND/Mrp_TM"/>
</dbReference>
<dbReference type="NCBIfam" id="TIGR01770">
    <property type="entry name" value="NDH_I_N"/>
    <property type="match status" value="1"/>
</dbReference>
<dbReference type="NCBIfam" id="NF002701">
    <property type="entry name" value="PRK02504.1"/>
    <property type="match status" value="1"/>
</dbReference>
<dbReference type="PANTHER" id="PTHR22773">
    <property type="entry name" value="NADH DEHYDROGENASE"/>
    <property type="match status" value="1"/>
</dbReference>
<dbReference type="Pfam" id="PF00361">
    <property type="entry name" value="Proton_antipo_M"/>
    <property type="match status" value="1"/>
</dbReference>
<organism>
    <name type="scientific">Paulinella chromatophora</name>
    <dbReference type="NCBI Taxonomy" id="39717"/>
    <lineage>
        <taxon>Eukaryota</taxon>
        <taxon>Sar</taxon>
        <taxon>Rhizaria</taxon>
        <taxon>Cercozoa</taxon>
        <taxon>Imbricatea</taxon>
        <taxon>Silicofilosea</taxon>
        <taxon>Euglyphida</taxon>
        <taxon>Paulinellidae</taxon>
        <taxon>Paulinella</taxon>
    </lineage>
</organism>
<evidence type="ECO:0000250" key="1"/>
<evidence type="ECO:0000255" key="2">
    <source>
        <dbReference type="HAMAP-Rule" id="MF_00445"/>
    </source>
</evidence>
<feature type="chain" id="PRO_0000344284" description="NAD(P)H-quinone oxidoreductase subunit 2, organellar chromatophore">
    <location>
        <begin position="1"/>
        <end position="512"/>
    </location>
</feature>
<feature type="transmembrane region" description="Helical" evidence="2">
    <location>
        <begin position="6"/>
        <end position="26"/>
    </location>
</feature>
<feature type="transmembrane region" description="Helical" evidence="2">
    <location>
        <begin position="43"/>
        <end position="63"/>
    </location>
</feature>
<feature type="transmembrane region" description="Helical" evidence="2">
    <location>
        <begin position="80"/>
        <end position="100"/>
    </location>
</feature>
<feature type="transmembrane region" description="Helical" evidence="2">
    <location>
        <begin position="107"/>
        <end position="127"/>
    </location>
</feature>
<feature type="transmembrane region" description="Helical" evidence="2">
    <location>
        <begin position="133"/>
        <end position="153"/>
    </location>
</feature>
<feature type="transmembrane region" description="Helical" evidence="2">
    <location>
        <begin position="168"/>
        <end position="188"/>
    </location>
</feature>
<feature type="transmembrane region" description="Helical" evidence="2">
    <location>
        <begin position="210"/>
        <end position="230"/>
    </location>
</feature>
<feature type="transmembrane region" description="Helical" evidence="2">
    <location>
        <begin position="242"/>
        <end position="262"/>
    </location>
</feature>
<feature type="transmembrane region" description="Helical" evidence="2">
    <location>
        <begin position="276"/>
        <end position="296"/>
    </location>
</feature>
<feature type="transmembrane region" description="Helical" evidence="2">
    <location>
        <begin position="304"/>
        <end position="324"/>
    </location>
</feature>
<feature type="transmembrane region" description="Helical" evidence="2">
    <location>
        <begin position="332"/>
        <end position="352"/>
    </location>
</feature>
<feature type="transmembrane region" description="Helical" evidence="2">
    <location>
        <begin position="376"/>
        <end position="396"/>
    </location>
</feature>
<feature type="transmembrane region" description="Helical" evidence="2">
    <location>
        <begin position="411"/>
        <end position="431"/>
    </location>
</feature>
<feature type="transmembrane region" description="Helical" evidence="2">
    <location>
        <begin position="464"/>
        <end position="484"/>
    </location>
</feature>
<sequence>MENSGLLALPLNAATIVPEGAILLALLSSLLVDLAGEKTASRWVPPICYAGLGSALILLASQWNSTLSPSFLGAFLADNLAIAFRAIIATSTLFSLMISWRYVERSGAPMGEYAAILLAATLGAMFLCGSTDLVSIFVSLETLSVSSYLLAGYMKQDARSSEAALKYLLVGSATAAVFLYGASLLYGLTGGSTNLDAVALALQSSDTPVAALALVFVLATVAFKIAAVPFHQWTPDVYEGAPTPIVAFLSVGSKTAGFALALRLLVGCFESFDIQWKFLFSLLAILSMVLGNIVALSQTSMKRMLAYSSIGQAGFVMIGLVCGTEDGFAAMILYLATYLFMNMGAFACVILFSIRTGSDLIADYAGLYQKDPLVTIGLSLCLLSLGGIPPMLGFFGKIYLFFAGWADHQYLLVVTGLITSVVSIYYYISVIRMMVVIEPKEASDVVKSYAAVNWNIPGLNPLRVALLVCVIVTGIGGIFSNPLFQWANSAVAGTPILQKVIVTALGTTGTIS</sequence>
<keyword id="KW-0472">Membrane</keyword>
<keyword id="KW-0520">NAD</keyword>
<keyword id="KW-0521">NADP</keyword>
<keyword id="KW-0994">Organellar chromatophore</keyword>
<keyword id="KW-0934">Plastid</keyword>
<keyword id="KW-0618">Plastoquinone</keyword>
<keyword id="KW-0874">Quinone</keyword>
<keyword id="KW-0793">Thylakoid</keyword>
<keyword id="KW-1278">Translocase</keyword>
<keyword id="KW-0812">Transmembrane</keyword>
<keyword id="KW-1133">Transmembrane helix</keyword>
<accession>B1X5D6</accession>
<geneLocation type="organellar chromatophore"/>
<protein>
    <recommendedName>
        <fullName evidence="2">NAD(P)H-quinone oxidoreductase subunit 2, organellar chromatophore</fullName>
        <ecNumber evidence="2">7.1.1.-</ecNumber>
    </recommendedName>
    <alternativeName>
        <fullName evidence="2">NAD(P)H dehydrogenase, subunit 2</fullName>
    </alternativeName>
    <alternativeName>
        <fullName evidence="2">NADH-plastoquinone oxidoreductase subunit 2</fullName>
    </alternativeName>
</protein>
<gene>
    <name evidence="2" type="primary">ndhB</name>
    <name type="ordered locus">PCC_0740</name>
</gene>
<proteinExistence type="inferred from homology"/>
<reference key="1">
    <citation type="journal article" date="2008" name="Curr. Biol.">
        <title>Chromatophore genome sequence of Paulinella sheds light on acquisition of photosynthesis by eukaryotes.</title>
        <authorList>
            <person name="Nowack E.C.M."/>
            <person name="Melkonian M."/>
            <person name="Gloeckner G."/>
        </authorList>
    </citation>
    <scope>NUCLEOTIDE SEQUENCE [LARGE SCALE GENOMIC DNA]</scope>
</reference>
<comment type="function">
    <text evidence="2">NDH-1 shuttles electrons from an unknown electron donor, via FMN and iron-sulfur (Fe-S) centers, to quinones in the respiratory and/or the photosynthetic chain. The immediate electron acceptor for the enzyme in this species is believed to be plastoquinone. Couples the redox reaction to proton translocation, and thus conserves the redox energy in a proton gradient. Cyanobacterial NDH-1 also plays a role in inorganic carbon-concentration.</text>
</comment>
<comment type="catalytic activity">
    <reaction evidence="2">
        <text>a plastoquinone + NADH + (n+1) H(+)(in) = a plastoquinol + NAD(+) + n H(+)(out)</text>
        <dbReference type="Rhea" id="RHEA:42608"/>
        <dbReference type="Rhea" id="RHEA-COMP:9561"/>
        <dbReference type="Rhea" id="RHEA-COMP:9562"/>
        <dbReference type="ChEBI" id="CHEBI:15378"/>
        <dbReference type="ChEBI" id="CHEBI:17757"/>
        <dbReference type="ChEBI" id="CHEBI:57540"/>
        <dbReference type="ChEBI" id="CHEBI:57945"/>
        <dbReference type="ChEBI" id="CHEBI:62192"/>
    </reaction>
</comment>
<comment type="catalytic activity">
    <reaction evidence="2">
        <text>a plastoquinone + NADPH + (n+1) H(+)(in) = a plastoquinol + NADP(+) + n H(+)(out)</text>
        <dbReference type="Rhea" id="RHEA:42612"/>
        <dbReference type="Rhea" id="RHEA-COMP:9561"/>
        <dbReference type="Rhea" id="RHEA-COMP:9562"/>
        <dbReference type="ChEBI" id="CHEBI:15378"/>
        <dbReference type="ChEBI" id="CHEBI:17757"/>
        <dbReference type="ChEBI" id="CHEBI:57783"/>
        <dbReference type="ChEBI" id="CHEBI:58349"/>
        <dbReference type="ChEBI" id="CHEBI:62192"/>
    </reaction>
</comment>
<comment type="subunit">
    <text evidence="2">NDH-1 can be composed of about 15 different subunits; different subcomplexes with different compositions have been identified which probably have different functions.</text>
</comment>
<comment type="subcellular location">
    <subcellularLocation>
        <location evidence="1">Plastid</location>
        <location evidence="1">Organellar chromatophore thylakoid membrane</location>
        <topology evidence="2">Multi-pass membrane protein</topology>
    </subcellularLocation>
</comment>
<comment type="similarity">
    <text evidence="2">Belongs to the complex I subunit 2 family.</text>
</comment>
<name>NU2C_PAUCH</name>